<dbReference type="EMBL" id="CP000926">
    <property type="protein sequence ID" value="ABY96387.1"/>
    <property type="molecule type" value="Genomic_DNA"/>
</dbReference>
<dbReference type="RefSeq" id="WP_003255496.1">
    <property type="nucleotide sequence ID" value="NC_010322.1"/>
</dbReference>
<dbReference type="SMR" id="B0KK59"/>
<dbReference type="GeneID" id="93675514"/>
<dbReference type="KEGG" id="ppg:PputGB1_0476"/>
<dbReference type="eggNOG" id="COG0222">
    <property type="taxonomic scope" value="Bacteria"/>
</dbReference>
<dbReference type="HOGENOM" id="CLU_086499_3_2_6"/>
<dbReference type="Proteomes" id="UP000002157">
    <property type="component" value="Chromosome"/>
</dbReference>
<dbReference type="GO" id="GO:0022625">
    <property type="term" value="C:cytosolic large ribosomal subunit"/>
    <property type="evidence" value="ECO:0007669"/>
    <property type="project" value="TreeGrafter"/>
</dbReference>
<dbReference type="GO" id="GO:0003729">
    <property type="term" value="F:mRNA binding"/>
    <property type="evidence" value="ECO:0007669"/>
    <property type="project" value="TreeGrafter"/>
</dbReference>
<dbReference type="GO" id="GO:0003735">
    <property type="term" value="F:structural constituent of ribosome"/>
    <property type="evidence" value="ECO:0007669"/>
    <property type="project" value="InterPro"/>
</dbReference>
<dbReference type="GO" id="GO:0006412">
    <property type="term" value="P:translation"/>
    <property type="evidence" value="ECO:0007669"/>
    <property type="project" value="UniProtKB-UniRule"/>
</dbReference>
<dbReference type="CDD" id="cd00387">
    <property type="entry name" value="Ribosomal_L7_L12"/>
    <property type="match status" value="1"/>
</dbReference>
<dbReference type="FunFam" id="3.30.1390.10:FF:000001">
    <property type="entry name" value="50S ribosomal protein L7/L12"/>
    <property type="match status" value="1"/>
</dbReference>
<dbReference type="Gene3D" id="3.30.1390.10">
    <property type="match status" value="1"/>
</dbReference>
<dbReference type="Gene3D" id="1.20.5.710">
    <property type="entry name" value="Single helix bin"/>
    <property type="match status" value="1"/>
</dbReference>
<dbReference type="HAMAP" id="MF_00368">
    <property type="entry name" value="Ribosomal_bL12"/>
    <property type="match status" value="1"/>
</dbReference>
<dbReference type="InterPro" id="IPR000206">
    <property type="entry name" value="Ribosomal_bL12"/>
</dbReference>
<dbReference type="InterPro" id="IPR013823">
    <property type="entry name" value="Ribosomal_bL12_C"/>
</dbReference>
<dbReference type="InterPro" id="IPR014719">
    <property type="entry name" value="Ribosomal_bL12_C/ClpS-like"/>
</dbReference>
<dbReference type="InterPro" id="IPR008932">
    <property type="entry name" value="Ribosomal_bL12_oligo"/>
</dbReference>
<dbReference type="InterPro" id="IPR036235">
    <property type="entry name" value="Ribosomal_bL12_oligo_N_sf"/>
</dbReference>
<dbReference type="NCBIfam" id="TIGR00855">
    <property type="entry name" value="L12"/>
    <property type="match status" value="1"/>
</dbReference>
<dbReference type="PANTHER" id="PTHR45987">
    <property type="entry name" value="39S RIBOSOMAL PROTEIN L12"/>
    <property type="match status" value="1"/>
</dbReference>
<dbReference type="PANTHER" id="PTHR45987:SF4">
    <property type="entry name" value="LARGE RIBOSOMAL SUBUNIT PROTEIN BL12M"/>
    <property type="match status" value="1"/>
</dbReference>
<dbReference type="Pfam" id="PF00542">
    <property type="entry name" value="Ribosomal_L12"/>
    <property type="match status" value="1"/>
</dbReference>
<dbReference type="Pfam" id="PF16320">
    <property type="entry name" value="Ribosomal_L12_N"/>
    <property type="match status" value="1"/>
</dbReference>
<dbReference type="SUPFAM" id="SSF54736">
    <property type="entry name" value="ClpS-like"/>
    <property type="match status" value="1"/>
</dbReference>
<dbReference type="SUPFAM" id="SSF48300">
    <property type="entry name" value="Ribosomal protein L7/12, oligomerisation (N-terminal) domain"/>
    <property type="match status" value="1"/>
</dbReference>
<feature type="chain" id="PRO_1000079806" description="Large ribosomal subunit protein bL12">
    <location>
        <begin position="1"/>
        <end position="121"/>
    </location>
</feature>
<name>RL7_PSEPG</name>
<gene>
    <name evidence="1" type="primary">rplL</name>
    <name type="ordered locus">PputGB1_0476</name>
</gene>
<comment type="function">
    <text evidence="1">Forms part of the ribosomal stalk which helps the ribosome interact with GTP-bound translation factors. Is thus essential for accurate translation.</text>
</comment>
<comment type="subunit">
    <text evidence="1">Homodimer. Part of the ribosomal stalk of the 50S ribosomal subunit. Forms a multimeric L10(L12)X complex, where L10 forms an elongated spine to which 2 to 4 L12 dimers bind in a sequential fashion. Binds GTP-bound translation factors.</text>
</comment>
<comment type="similarity">
    <text evidence="1">Belongs to the bacterial ribosomal protein bL12 family.</text>
</comment>
<reference key="1">
    <citation type="submission" date="2008-01" db="EMBL/GenBank/DDBJ databases">
        <title>Complete sequence of Pseudomonas putida GB-1.</title>
        <authorList>
            <consortium name="US DOE Joint Genome Institute"/>
            <person name="Copeland A."/>
            <person name="Lucas S."/>
            <person name="Lapidus A."/>
            <person name="Barry K."/>
            <person name="Glavina del Rio T."/>
            <person name="Dalin E."/>
            <person name="Tice H."/>
            <person name="Pitluck S."/>
            <person name="Bruce D."/>
            <person name="Goodwin L."/>
            <person name="Chertkov O."/>
            <person name="Brettin T."/>
            <person name="Detter J.C."/>
            <person name="Han C."/>
            <person name="Kuske C.R."/>
            <person name="Schmutz J."/>
            <person name="Larimer F."/>
            <person name="Land M."/>
            <person name="Hauser L."/>
            <person name="Kyrpides N."/>
            <person name="Kim E."/>
            <person name="McCarthy J.K."/>
            <person name="Richardson P."/>
        </authorList>
    </citation>
    <scope>NUCLEOTIDE SEQUENCE [LARGE SCALE GENOMIC DNA]</scope>
    <source>
        <strain>GB-1</strain>
    </source>
</reference>
<organism>
    <name type="scientific">Pseudomonas putida (strain GB-1)</name>
    <dbReference type="NCBI Taxonomy" id="76869"/>
    <lineage>
        <taxon>Bacteria</taxon>
        <taxon>Pseudomonadati</taxon>
        <taxon>Pseudomonadota</taxon>
        <taxon>Gammaproteobacteria</taxon>
        <taxon>Pseudomonadales</taxon>
        <taxon>Pseudomonadaceae</taxon>
        <taxon>Pseudomonas</taxon>
    </lineage>
</organism>
<proteinExistence type="inferred from homology"/>
<keyword id="KW-0687">Ribonucleoprotein</keyword>
<keyword id="KW-0689">Ribosomal protein</keyword>
<protein>
    <recommendedName>
        <fullName evidence="1">Large ribosomal subunit protein bL12</fullName>
    </recommendedName>
    <alternativeName>
        <fullName evidence="2">50S ribosomal protein L7/L12</fullName>
    </alternativeName>
</protein>
<accession>B0KK59</accession>
<evidence type="ECO:0000255" key="1">
    <source>
        <dbReference type="HAMAP-Rule" id="MF_00368"/>
    </source>
</evidence>
<evidence type="ECO:0000305" key="2"/>
<sequence length="121" mass="12600">MSLTNEQIIEAIGQKTVLEVVELIKAMEETFGVTAAVAAAGPAAAAAVVEEQTEFNVVLVEAGDKKVNVIKAVRELTGLGLKEAKEKVDGAPQVVAEGVSKEAAEDAKKKLEEAGAKVELK</sequence>